<evidence type="ECO:0000255" key="1">
    <source>
        <dbReference type="HAMAP-Rule" id="MF_00074"/>
    </source>
</evidence>
<accession>A1SBV0</accession>
<keyword id="KW-0963">Cytoplasm</keyword>
<keyword id="KW-0489">Methyltransferase</keyword>
<keyword id="KW-1185">Reference proteome</keyword>
<keyword id="KW-0698">rRNA processing</keyword>
<keyword id="KW-0949">S-adenosyl-L-methionine</keyword>
<keyword id="KW-0808">Transferase</keyword>
<gene>
    <name evidence="1" type="primary">rsmG</name>
    <name type="ordered locus">Sama_3654</name>
</gene>
<sequence>MLAEKLSQDLAKAGLQVDAQQQQQLLAFVALLDKWNKAYNLTSVREPAQMLTRHILDSLVVSPHLVGSRFIDVGTGPGLPGIPLAIINPDKEFVLLDSLGKRIRFQKQVAVELGLKNISSVESRVELYQPEQGFDGVLSRAFASVGDMLSWCHHLPAENGSFYALKGQLGDEEMAGIPEGFKLIETIRLTVPGLDEQRHLLKLVKA</sequence>
<proteinExistence type="inferred from homology"/>
<protein>
    <recommendedName>
        <fullName evidence="1">Ribosomal RNA small subunit methyltransferase G</fullName>
        <ecNumber evidence="1">2.1.1.170</ecNumber>
    </recommendedName>
    <alternativeName>
        <fullName evidence="1">16S rRNA 7-methylguanosine methyltransferase</fullName>
        <shortName evidence="1">16S rRNA m7G methyltransferase</shortName>
    </alternativeName>
</protein>
<feature type="chain" id="PRO_1000010198" description="Ribosomal RNA small subunit methyltransferase G">
    <location>
        <begin position="1"/>
        <end position="206"/>
    </location>
</feature>
<feature type="binding site" evidence="1">
    <location>
        <position position="74"/>
    </location>
    <ligand>
        <name>S-adenosyl-L-methionine</name>
        <dbReference type="ChEBI" id="CHEBI:59789"/>
    </ligand>
</feature>
<feature type="binding site" evidence="1">
    <location>
        <position position="79"/>
    </location>
    <ligand>
        <name>S-adenosyl-L-methionine</name>
        <dbReference type="ChEBI" id="CHEBI:59789"/>
    </ligand>
</feature>
<feature type="binding site" evidence="1">
    <location>
        <begin position="125"/>
        <end position="126"/>
    </location>
    <ligand>
        <name>S-adenosyl-L-methionine</name>
        <dbReference type="ChEBI" id="CHEBI:59789"/>
    </ligand>
</feature>
<feature type="binding site" evidence="1">
    <location>
        <position position="140"/>
    </location>
    <ligand>
        <name>S-adenosyl-L-methionine</name>
        <dbReference type="ChEBI" id="CHEBI:59789"/>
    </ligand>
</feature>
<organism>
    <name type="scientific">Shewanella amazonensis (strain ATCC BAA-1098 / SB2B)</name>
    <dbReference type="NCBI Taxonomy" id="326297"/>
    <lineage>
        <taxon>Bacteria</taxon>
        <taxon>Pseudomonadati</taxon>
        <taxon>Pseudomonadota</taxon>
        <taxon>Gammaproteobacteria</taxon>
        <taxon>Alteromonadales</taxon>
        <taxon>Shewanellaceae</taxon>
        <taxon>Shewanella</taxon>
    </lineage>
</organism>
<dbReference type="EC" id="2.1.1.170" evidence="1"/>
<dbReference type="EMBL" id="CP000507">
    <property type="protein sequence ID" value="ABM01857.1"/>
    <property type="molecule type" value="Genomic_DNA"/>
</dbReference>
<dbReference type="RefSeq" id="WP_011761760.1">
    <property type="nucleotide sequence ID" value="NC_008700.1"/>
</dbReference>
<dbReference type="SMR" id="A1SBV0"/>
<dbReference type="STRING" id="326297.Sama_3654"/>
<dbReference type="KEGG" id="saz:Sama_3654"/>
<dbReference type="eggNOG" id="COG0357">
    <property type="taxonomic scope" value="Bacteria"/>
</dbReference>
<dbReference type="HOGENOM" id="CLU_065341_2_2_6"/>
<dbReference type="OrthoDB" id="9808773at2"/>
<dbReference type="Proteomes" id="UP000009175">
    <property type="component" value="Chromosome"/>
</dbReference>
<dbReference type="GO" id="GO:0005829">
    <property type="term" value="C:cytosol"/>
    <property type="evidence" value="ECO:0007669"/>
    <property type="project" value="TreeGrafter"/>
</dbReference>
<dbReference type="GO" id="GO:0070043">
    <property type="term" value="F:rRNA (guanine-N7-)-methyltransferase activity"/>
    <property type="evidence" value="ECO:0007669"/>
    <property type="project" value="UniProtKB-UniRule"/>
</dbReference>
<dbReference type="CDD" id="cd02440">
    <property type="entry name" value="AdoMet_MTases"/>
    <property type="match status" value="1"/>
</dbReference>
<dbReference type="FunFam" id="3.40.50.150:FF:000032">
    <property type="entry name" value="Ribosomal RNA small subunit methyltransferase G"/>
    <property type="match status" value="1"/>
</dbReference>
<dbReference type="Gene3D" id="3.40.50.150">
    <property type="entry name" value="Vaccinia Virus protein VP39"/>
    <property type="match status" value="1"/>
</dbReference>
<dbReference type="HAMAP" id="MF_00074">
    <property type="entry name" value="16SrRNA_methyltr_G"/>
    <property type="match status" value="1"/>
</dbReference>
<dbReference type="InterPro" id="IPR003682">
    <property type="entry name" value="rRNA_ssu_MeTfrase_G"/>
</dbReference>
<dbReference type="InterPro" id="IPR029063">
    <property type="entry name" value="SAM-dependent_MTases_sf"/>
</dbReference>
<dbReference type="NCBIfam" id="TIGR00138">
    <property type="entry name" value="rsmG_gidB"/>
    <property type="match status" value="1"/>
</dbReference>
<dbReference type="PANTHER" id="PTHR31760">
    <property type="entry name" value="S-ADENOSYL-L-METHIONINE-DEPENDENT METHYLTRANSFERASES SUPERFAMILY PROTEIN"/>
    <property type="match status" value="1"/>
</dbReference>
<dbReference type="PANTHER" id="PTHR31760:SF0">
    <property type="entry name" value="S-ADENOSYL-L-METHIONINE-DEPENDENT METHYLTRANSFERASES SUPERFAMILY PROTEIN"/>
    <property type="match status" value="1"/>
</dbReference>
<dbReference type="Pfam" id="PF02527">
    <property type="entry name" value="GidB"/>
    <property type="match status" value="1"/>
</dbReference>
<dbReference type="PIRSF" id="PIRSF003078">
    <property type="entry name" value="GidB"/>
    <property type="match status" value="1"/>
</dbReference>
<dbReference type="SUPFAM" id="SSF53335">
    <property type="entry name" value="S-adenosyl-L-methionine-dependent methyltransferases"/>
    <property type="match status" value="1"/>
</dbReference>
<name>RSMG_SHEAM</name>
<reference key="1">
    <citation type="submission" date="2006-12" db="EMBL/GenBank/DDBJ databases">
        <title>Complete sequence of Shewanella amazonensis SB2B.</title>
        <authorList>
            <consortium name="US DOE Joint Genome Institute"/>
            <person name="Copeland A."/>
            <person name="Lucas S."/>
            <person name="Lapidus A."/>
            <person name="Barry K."/>
            <person name="Detter J.C."/>
            <person name="Glavina del Rio T."/>
            <person name="Hammon N."/>
            <person name="Israni S."/>
            <person name="Dalin E."/>
            <person name="Tice H."/>
            <person name="Pitluck S."/>
            <person name="Munk A.C."/>
            <person name="Brettin T."/>
            <person name="Bruce D."/>
            <person name="Han C."/>
            <person name="Tapia R."/>
            <person name="Gilna P."/>
            <person name="Schmutz J."/>
            <person name="Larimer F."/>
            <person name="Land M."/>
            <person name="Hauser L."/>
            <person name="Kyrpides N."/>
            <person name="Mikhailova N."/>
            <person name="Fredrickson J."/>
            <person name="Richardson P."/>
        </authorList>
    </citation>
    <scope>NUCLEOTIDE SEQUENCE [LARGE SCALE GENOMIC DNA]</scope>
    <source>
        <strain>ATCC BAA-1098 / SB2B</strain>
    </source>
</reference>
<comment type="function">
    <text evidence="1">Specifically methylates the N7 position of guanine in position 527 of 16S rRNA.</text>
</comment>
<comment type="catalytic activity">
    <reaction evidence="1">
        <text>guanosine(527) in 16S rRNA + S-adenosyl-L-methionine = N(7)-methylguanosine(527) in 16S rRNA + S-adenosyl-L-homocysteine</text>
        <dbReference type="Rhea" id="RHEA:42732"/>
        <dbReference type="Rhea" id="RHEA-COMP:10209"/>
        <dbReference type="Rhea" id="RHEA-COMP:10210"/>
        <dbReference type="ChEBI" id="CHEBI:57856"/>
        <dbReference type="ChEBI" id="CHEBI:59789"/>
        <dbReference type="ChEBI" id="CHEBI:74269"/>
        <dbReference type="ChEBI" id="CHEBI:74480"/>
        <dbReference type="EC" id="2.1.1.170"/>
    </reaction>
</comment>
<comment type="subcellular location">
    <subcellularLocation>
        <location evidence="1">Cytoplasm</location>
    </subcellularLocation>
</comment>
<comment type="similarity">
    <text evidence="1">Belongs to the methyltransferase superfamily. RNA methyltransferase RsmG family.</text>
</comment>